<keyword id="KW-0391">Immunity</keyword>
<keyword id="KW-0399">Innate immunity</keyword>
<keyword id="KW-0472">Membrane</keyword>
<keyword id="KW-0496">Mitochondrion</keyword>
<keyword id="KW-0999">Mitochondrion inner membrane</keyword>
<keyword id="KW-1000">Mitochondrion outer membrane</keyword>
<keyword id="KW-1185">Reference proteome</keyword>
<keyword id="KW-0812">Transmembrane</keyword>
<keyword id="KW-1133">Transmembrane helix</keyword>
<dbReference type="EMBL" id="BX649476">
    <property type="status" value="NOT_ANNOTATED_CDS"/>
    <property type="molecule type" value="Genomic_DNA"/>
</dbReference>
<dbReference type="EMBL" id="BC162188">
    <property type="protein sequence ID" value="AAI62188.1"/>
    <property type="molecule type" value="mRNA"/>
</dbReference>
<dbReference type="EMBL" id="BC162192">
    <property type="protein sequence ID" value="AAI62192.1"/>
    <property type="molecule type" value="mRNA"/>
</dbReference>
<dbReference type="RefSeq" id="NP_001289563.1">
    <property type="nucleotide sequence ID" value="NM_001302634.1"/>
</dbReference>
<dbReference type="SMR" id="B3DFW5"/>
<dbReference type="FunCoup" id="B3DFW5">
    <property type="interactions" value="227"/>
</dbReference>
<dbReference type="STRING" id="7955.ENSDARP00000134335"/>
<dbReference type="Ensembl" id="ENSDART00000134054">
    <property type="protein sequence ID" value="ENSDARP00000134335"/>
    <property type="gene ID" value="ENSDARG00000093058"/>
</dbReference>
<dbReference type="GeneID" id="100170826"/>
<dbReference type="KEGG" id="dre:100170826"/>
<dbReference type="AGR" id="ZFIN:ZDB-GENE-041210-156"/>
<dbReference type="CTD" id="647087"/>
<dbReference type="ZFIN" id="ZDB-GENE-041210-156">
    <property type="gene designation" value="stmp1"/>
</dbReference>
<dbReference type="HOGENOM" id="CLU_3177783_0_0_1"/>
<dbReference type="InParanoid" id="B3DFW5"/>
<dbReference type="OrthoDB" id="2012160at2759"/>
<dbReference type="PRO" id="PR:B3DFW5"/>
<dbReference type="Proteomes" id="UP000000437">
    <property type="component" value="Chromosome 4"/>
</dbReference>
<dbReference type="Bgee" id="ENSDARG00000093058">
    <property type="expression patterns" value="Expressed in early embryo and 28 other cell types or tissues"/>
</dbReference>
<dbReference type="GO" id="GO:0005743">
    <property type="term" value="C:mitochondrial inner membrane"/>
    <property type="evidence" value="ECO:0000250"/>
    <property type="project" value="UniProtKB"/>
</dbReference>
<dbReference type="GO" id="GO:0005758">
    <property type="term" value="C:mitochondrial intermembrane space"/>
    <property type="evidence" value="ECO:0000250"/>
    <property type="project" value="UniProtKB"/>
</dbReference>
<dbReference type="GO" id="GO:0005741">
    <property type="term" value="C:mitochondrial outer membrane"/>
    <property type="evidence" value="ECO:0000250"/>
    <property type="project" value="UniProtKB"/>
</dbReference>
<dbReference type="GO" id="GO:0098803">
    <property type="term" value="C:respiratory chain complex"/>
    <property type="evidence" value="ECO:0000315"/>
    <property type="project" value="ZFIN"/>
</dbReference>
<dbReference type="GO" id="GO:0045087">
    <property type="term" value="P:innate immune response"/>
    <property type="evidence" value="ECO:0007669"/>
    <property type="project" value="UniProtKB-KW"/>
</dbReference>
<dbReference type="GO" id="GO:0097250">
    <property type="term" value="P:mitochondrial respirasome assembly"/>
    <property type="evidence" value="ECO:0000250"/>
    <property type="project" value="UniProtKB"/>
</dbReference>
<dbReference type="GO" id="GO:0034551">
    <property type="term" value="P:mitochondrial respiratory chain complex III assembly"/>
    <property type="evidence" value="ECO:0000250"/>
    <property type="project" value="UniProtKB"/>
</dbReference>
<dbReference type="GO" id="GO:0032731">
    <property type="term" value="P:positive regulation of interleukin-1 beta production"/>
    <property type="evidence" value="ECO:0000250"/>
    <property type="project" value="UniProtKB"/>
</dbReference>
<dbReference type="GO" id="GO:1900227">
    <property type="term" value="P:positive regulation of NLRP3 inflammasome complex assembly"/>
    <property type="evidence" value="ECO:0000250"/>
    <property type="project" value="UniProtKB"/>
</dbReference>
<dbReference type="InterPro" id="IPR027854">
    <property type="entry name" value="STMP1"/>
</dbReference>
<dbReference type="PANTHER" id="PTHR47709">
    <property type="entry name" value="SHORT TRANSMEMBRANE MITOCHONDRIAL PROTEIN 1"/>
    <property type="match status" value="1"/>
</dbReference>
<dbReference type="PANTHER" id="PTHR47709:SF2">
    <property type="entry name" value="SHORT TRANSMEMBRANE MITOCHONDRIAL PROTEIN 1"/>
    <property type="match status" value="1"/>
</dbReference>
<dbReference type="Pfam" id="PF15054">
    <property type="entry name" value="DUF4535"/>
    <property type="match status" value="1"/>
</dbReference>
<name>STMP1_DANRE</name>
<reference key="1">
    <citation type="journal article" date="2013" name="Nature">
        <title>The zebrafish reference genome sequence and its relationship to the human genome.</title>
        <authorList>
            <person name="Howe K."/>
            <person name="Clark M.D."/>
            <person name="Torroja C.F."/>
            <person name="Torrance J."/>
            <person name="Berthelot C."/>
            <person name="Muffato M."/>
            <person name="Collins J.E."/>
            <person name="Humphray S."/>
            <person name="McLaren K."/>
            <person name="Matthews L."/>
            <person name="McLaren S."/>
            <person name="Sealy I."/>
            <person name="Caccamo M."/>
            <person name="Churcher C."/>
            <person name="Scott C."/>
            <person name="Barrett J.C."/>
            <person name="Koch R."/>
            <person name="Rauch G.J."/>
            <person name="White S."/>
            <person name="Chow W."/>
            <person name="Kilian B."/>
            <person name="Quintais L.T."/>
            <person name="Guerra-Assuncao J.A."/>
            <person name="Zhou Y."/>
            <person name="Gu Y."/>
            <person name="Yen J."/>
            <person name="Vogel J.H."/>
            <person name="Eyre T."/>
            <person name="Redmond S."/>
            <person name="Banerjee R."/>
            <person name="Chi J."/>
            <person name="Fu B."/>
            <person name="Langley E."/>
            <person name="Maguire S.F."/>
            <person name="Laird G.K."/>
            <person name="Lloyd D."/>
            <person name="Kenyon E."/>
            <person name="Donaldson S."/>
            <person name="Sehra H."/>
            <person name="Almeida-King J."/>
            <person name="Loveland J."/>
            <person name="Trevanion S."/>
            <person name="Jones M."/>
            <person name="Quail M."/>
            <person name="Willey D."/>
            <person name="Hunt A."/>
            <person name="Burton J."/>
            <person name="Sims S."/>
            <person name="McLay K."/>
            <person name="Plumb B."/>
            <person name="Davis J."/>
            <person name="Clee C."/>
            <person name="Oliver K."/>
            <person name="Clark R."/>
            <person name="Riddle C."/>
            <person name="Elliot D."/>
            <person name="Threadgold G."/>
            <person name="Harden G."/>
            <person name="Ware D."/>
            <person name="Begum S."/>
            <person name="Mortimore B."/>
            <person name="Kerry G."/>
            <person name="Heath P."/>
            <person name="Phillimore B."/>
            <person name="Tracey A."/>
            <person name="Corby N."/>
            <person name="Dunn M."/>
            <person name="Johnson C."/>
            <person name="Wood J."/>
            <person name="Clark S."/>
            <person name="Pelan S."/>
            <person name="Griffiths G."/>
            <person name="Smith M."/>
            <person name="Glithero R."/>
            <person name="Howden P."/>
            <person name="Barker N."/>
            <person name="Lloyd C."/>
            <person name="Stevens C."/>
            <person name="Harley J."/>
            <person name="Holt K."/>
            <person name="Panagiotidis G."/>
            <person name="Lovell J."/>
            <person name="Beasley H."/>
            <person name="Henderson C."/>
            <person name="Gordon D."/>
            <person name="Auger K."/>
            <person name="Wright D."/>
            <person name="Collins J."/>
            <person name="Raisen C."/>
            <person name="Dyer L."/>
            <person name="Leung K."/>
            <person name="Robertson L."/>
            <person name="Ambridge K."/>
            <person name="Leongamornlert D."/>
            <person name="McGuire S."/>
            <person name="Gilderthorp R."/>
            <person name="Griffiths C."/>
            <person name="Manthravadi D."/>
            <person name="Nichol S."/>
            <person name="Barker G."/>
            <person name="Whitehead S."/>
            <person name="Kay M."/>
            <person name="Brown J."/>
            <person name="Murnane C."/>
            <person name="Gray E."/>
            <person name="Humphries M."/>
            <person name="Sycamore N."/>
            <person name="Barker D."/>
            <person name="Saunders D."/>
            <person name="Wallis J."/>
            <person name="Babbage A."/>
            <person name="Hammond S."/>
            <person name="Mashreghi-Mohammadi M."/>
            <person name="Barr L."/>
            <person name="Martin S."/>
            <person name="Wray P."/>
            <person name="Ellington A."/>
            <person name="Matthews N."/>
            <person name="Ellwood M."/>
            <person name="Woodmansey R."/>
            <person name="Clark G."/>
            <person name="Cooper J."/>
            <person name="Tromans A."/>
            <person name="Grafham D."/>
            <person name="Skuce C."/>
            <person name="Pandian R."/>
            <person name="Andrews R."/>
            <person name="Harrison E."/>
            <person name="Kimberley A."/>
            <person name="Garnett J."/>
            <person name="Fosker N."/>
            <person name="Hall R."/>
            <person name="Garner P."/>
            <person name="Kelly D."/>
            <person name="Bird C."/>
            <person name="Palmer S."/>
            <person name="Gehring I."/>
            <person name="Berger A."/>
            <person name="Dooley C.M."/>
            <person name="Ersan-Urun Z."/>
            <person name="Eser C."/>
            <person name="Geiger H."/>
            <person name="Geisler M."/>
            <person name="Karotki L."/>
            <person name="Kirn A."/>
            <person name="Konantz J."/>
            <person name="Konantz M."/>
            <person name="Oberlander M."/>
            <person name="Rudolph-Geiger S."/>
            <person name="Teucke M."/>
            <person name="Lanz C."/>
            <person name="Raddatz G."/>
            <person name="Osoegawa K."/>
            <person name="Zhu B."/>
            <person name="Rapp A."/>
            <person name="Widaa S."/>
            <person name="Langford C."/>
            <person name="Yang F."/>
            <person name="Schuster S.C."/>
            <person name="Carter N.P."/>
            <person name="Harrow J."/>
            <person name="Ning Z."/>
            <person name="Herrero J."/>
            <person name="Searle S.M."/>
            <person name="Enright A."/>
            <person name="Geisler R."/>
            <person name="Plasterk R.H."/>
            <person name="Lee C."/>
            <person name="Westerfield M."/>
            <person name="de Jong P.J."/>
            <person name="Zon L.I."/>
            <person name="Postlethwait J.H."/>
            <person name="Nusslein-Volhard C."/>
            <person name="Hubbard T.J."/>
            <person name="Roest Crollius H."/>
            <person name="Rogers J."/>
            <person name="Stemple D.L."/>
        </authorList>
    </citation>
    <scope>NUCLEOTIDE SEQUENCE [LARGE SCALE GENOMIC DNA]</scope>
    <source>
        <strain>Tuebingen</strain>
    </source>
</reference>
<reference key="2">
    <citation type="submission" date="2008-04" db="EMBL/GenBank/DDBJ databases">
        <authorList>
            <consortium name="NIH - Zebrafish Gene Collection (ZGC) project"/>
        </authorList>
    </citation>
    <scope>NUCLEOTIDE SEQUENCE [LARGE SCALE MRNA]</scope>
</reference>
<reference key="3">
    <citation type="journal article" date="2012" name="Physiol. Genomics">
        <title>Functional prediction and physiological characterization of a novel short trans-membrane protein 1 as a subunit of mitochondrial respiratory complexes.</title>
        <authorList>
            <person name="Zhang D."/>
            <person name="Xi Y."/>
            <person name="Coccimiglio M.L."/>
            <person name="Mennigen J.A."/>
            <person name="Jonz M.G."/>
            <person name="Ekker M."/>
            <person name="Trudeau V.L."/>
        </authorList>
    </citation>
    <scope>TISSUE SPECIFICITY</scope>
    <scope>DEVELOPMENTAL STAGE</scope>
    <scope>DISRUPTION PHENOTYPE</scope>
</reference>
<accession>B3DFW5</accession>
<comment type="function">
    <text evidence="1 2">Microprotein involved in mitochondrial respiratory chain complex III (ubiquinol-cytochrome c oxidoreductase) and complex IV (mitochondrial cytochrome c oxidase complex) assembly (By similarity). Required for the formation of mitochondrial supercomplexes (SCs) (By similarity). Also required for the activation of the NLRP3 inflammasome (By similarity).</text>
</comment>
<comment type="subcellular location">
    <subcellularLocation>
        <location evidence="1">Mitochondrion inner membrane</location>
        <topology evidence="3">Single-pass membrane protein</topology>
    </subcellularLocation>
    <subcellularLocation>
        <location evidence="2">Mitochondrion outer membrane</location>
        <topology evidence="3">Single-pass membrane protein</topology>
    </subcellularLocation>
    <subcellularLocation>
        <location evidence="2">Mitochondrion intermembrane space</location>
    </subcellularLocation>
</comment>
<comment type="tissue specificity">
    <text evidence="4">Widely expressed. Expressed more abundantly in brain compared with other tissues such as heart, muscle and liver.</text>
</comment>
<comment type="developmental stage">
    <text evidence="4">Stable expression throughout embryogenesis with more abundance after 5 days post-fertilization (dpf).</text>
</comment>
<comment type="disruption phenotype">
    <text evidence="4">Morpholino knockdown of the protein leads to various development defects, including smaller eye, abnormal head shape, malformations of the jaw, cardiac edema and a delayed yolk sac resorption (PubMed:23073385). Most animals die by 1 week of age (PubMed:23073385).</text>
</comment>
<comment type="similarity">
    <text evidence="7">Belongs to the STMP1 family.</text>
</comment>
<evidence type="ECO:0000250" key="1">
    <source>
        <dbReference type="UniProtKB" id="E0CX11"/>
    </source>
</evidence>
<evidence type="ECO:0000250" key="2">
    <source>
        <dbReference type="UniProtKB" id="P0DP99"/>
    </source>
</evidence>
<evidence type="ECO:0000255" key="3"/>
<evidence type="ECO:0000269" key="4">
    <source>
    </source>
</evidence>
<evidence type="ECO:0000303" key="5">
    <source>
    </source>
</evidence>
<evidence type="ECO:0000303" key="6">
    <source>
    </source>
</evidence>
<evidence type="ECO:0000305" key="7"/>
<protein>
    <recommendedName>
        <fullName evidence="5">Short transmembrane mitochondrial protein 1</fullName>
    </recommendedName>
</protein>
<gene>
    <name evidence="5" type="primary">stmp1</name>
    <name evidence="6" type="ORF">si:dkey-13i19.8</name>
</gene>
<organism>
    <name type="scientific">Danio rerio</name>
    <name type="common">Zebrafish</name>
    <name type="synonym">Brachydanio rerio</name>
    <dbReference type="NCBI Taxonomy" id="7955"/>
    <lineage>
        <taxon>Eukaryota</taxon>
        <taxon>Metazoa</taxon>
        <taxon>Chordata</taxon>
        <taxon>Craniata</taxon>
        <taxon>Vertebrata</taxon>
        <taxon>Euteleostomi</taxon>
        <taxon>Actinopterygii</taxon>
        <taxon>Neopterygii</taxon>
        <taxon>Teleostei</taxon>
        <taxon>Ostariophysi</taxon>
        <taxon>Cypriniformes</taxon>
        <taxon>Danionidae</taxon>
        <taxon>Danioninae</taxon>
        <taxon>Danio</taxon>
    </lineage>
</organism>
<proteinExistence type="evidence at transcript level"/>
<feature type="chain" id="PRO_0000441871" description="Short transmembrane mitochondrial protein 1">
    <location>
        <begin position="1"/>
        <end position="46"/>
    </location>
</feature>
<feature type="transmembrane region" description="Helical" evidence="3">
    <location>
        <begin position="7"/>
        <end position="23"/>
    </location>
</feature>
<sequence length="46" mass="5246">MMQFILGFTLGNVVGMYLAQNYEVPNISKKIEAFKKDVEAKKKPPE</sequence>